<proteinExistence type="inferred from homology"/>
<gene>
    <name type="primary">WFDC12</name>
</gene>
<feature type="signal peptide" evidence="2">
    <location>
        <begin position="1"/>
        <end position="23"/>
    </location>
</feature>
<feature type="chain" id="PRO_0000289652" description="WAP four-disulfide core domain protein 12">
    <location>
        <begin position="24"/>
        <end position="111"/>
    </location>
</feature>
<feature type="domain" description="WAP" evidence="3">
    <location>
        <begin position="27"/>
        <end position="74"/>
    </location>
</feature>
<feature type="region of interest" description="Disordered" evidence="4">
    <location>
        <begin position="80"/>
        <end position="111"/>
    </location>
</feature>
<feature type="compositionally biased region" description="Polar residues" evidence="4">
    <location>
        <begin position="102"/>
        <end position="111"/>
    </location>
</feature>
<feature type="disulfide bond" evidence="3">
    <location>
        <begin position="34"/>
        <end position="62"/>
    </location>
</feature>
<feature type="disulfide bond" evidence="3">
    <location>
        <begin position="41"/>
        <end position="66"/>
    </location>
</feature>
<feature type="disulfide bond" evidence="3">
    <location>
        <begin position="49"/>
        <end position="61"/>
    </location>
</feature>
<feature type="disulfide bond" evidence="3">
    <location>
        <begin position="55"/>
        <end position="70"/>
    </location>
</feature>
<name>WFD12_PANTR</name>
<protein>
    <recommendedName>
        <fullName>WAP four-disulfide core domain protein 12</fullName>
    </recommendedName>
</protein>
<reference key="1">
    <citation type="journal article" date="2007" name="Genome Res.">
        <title>Comparative sequence analyses reveal rapid and divergent evolutionary changes of the WFDC locus in the primate lineage.</title>
        <authorList>
            <consortium name="NISC comparative sequencing program"/>
            <person name="Hurle B."/>
            <person name="Swanson W."/>
            <person name="Green E.D."/>
        </authorList>
    </citation>
    <scope>NUCLEOTIDE SEQUENCE [GENOMIC DNA]</scope>
</reference>
<organism>
    <name type="scientific">Pan troglodytes</name>
    <name type="common">Chimpanzee</name>
    <dbReference type="NCBI Taxonomy" id="9598"/>
    <lineage>
        <taxon>Eukaryota</taxon>
        <taxon>Metazoa</taxon>
        <taxon>Chordata</taxon>
        <taxon>Craniata</taxon>
        <taxon>Vertebrata</taxon>
        <taxon>Euteleostomi</taxon>
        <taxon>Mammalia</taxon>
        <taxon>Eutheria</taxon>
        <taxon>Euarchontoglires</taxon>
        <taxon>Primates</taxon>
        <taxon>Haplorrhini</taxon>
        <taxon>Catarrhini</taxon>
        <taxon>Hominidae</taxon>
        <taxon>Pan</taxon>
    </lineage>
</organism>
<keyword id="KW-0044">Antibiotic</keyword>
<keyword id="KW-0929">Antimicrobial</keyword>
<keyword id="KW-1015">Disulfide bond</keyword>
<keyword id="KW-0646">Protease inhibitor</keyword>
<keyword id="KW-1185">Reference proteome</keyword>
<keyword id="KW-0964">Secreted</keyword>
<keyword id="KW-0722">Serine protease inhibitor</keyword>
<keyword id="KW-0732">Signal</keyword>
<sequence>MGSSSFLVLMVSLTLVTLVAVEGVKEDIEKAGVCPADNVRCFKSDPPQCHTDQDCLGERKCCYLHCGFKCVIPVKELEEGGNKDEDVSRPYPEPGWEAKCPGSSSTRCPQK</sequence>
<evidence type="ECO:0000250" key="1"/>
<evidence type="ECO:0000255" key="2"/>
<evidence type="ECO:0000255" key="3">
    <source>
        <dbReference type="PROSITE-ProRule" id="PRU00722"/>
    </source>
</evidence>
<evidence type="ECO:0000256" key="4">
    <source>
        <dbReference type="SAM" id="MobiDB-lite"/>
    </source>
</evidence>
<evidence type="ECO:0000305" key="5"/>
<accession>A4K2P0</accession>
<comment type="function">
    <text evidence="1">Antibacterial protein. Putative acid-stable proteinase inhibitor (By similarity).</text>
</comment>
<comment type="subcellular location">
    <subcellularLocation>
        <location evidence="5">Secreted</location>
    </subcellularLocation>
</comment>
<dbReference type="EMBL" id="DP000037">
    <property type="protein sequence ID" value="ABO52925.1"/>
    <property type="molecule type" value="Genomic_DNA"/>
</dbReference>
<dbReference type="RefSeq" id="NP_001129325.1">
    <property type="nucleotide sequence ID" value="NM_001135853.1"/>
</dbReference>
<dbReference type="SMR" id="A4K2P0"/>
<dbReference type="FunCoup" id="A4K2P0">
    <property type="interactions" value="1"/>
</dbReference>
<dbReference type="STRING" id="9598.ENSPTRP00000023247"/>
<dbReference type="MEROPS" id="I17.003"/>
<dbReference type="PaxDb" id="9598-ENSPTRP00000023247"/>
<dbReference type="Ensembl" id="ENSPTRT00000025190.4">
    <property type="protein sequence ID" value="ENSPTRP00000023247.3"/>
    <property type="gene ID" value="ENSPTRG00000013536.4"/>
</dbReference>
<dbReference type="GeneID" id="740415"/>
<dbReference type="KEGG" id="ptr:740415"/>
<dbReference type="CTD" id="128488"/>
<dbReference type="VGNC" id="VGNC:10136">
    <property type="gene designation" value="WFDC12"/>
</dbReference>
<dbReference type="eggNOG" id="ENOG502TDXW">
    <property type="taxonomic scope" value="Eukaryota"/>
</dbReference>
<dbReference type="GeneTree" id="ENSGT00390000012286"/>
<dbReference type="HOGENOM" id="CLU_172659_0_0_1"/>
<dbReference type="InParanoid" id="A4K2P0"/>
<dbReference type="OMA" id="CIKSDPP"/>
<dbReference type="OrthoDB" id="10583at9604"/>
<dbReference type="TreeFam" id="TF338375"/>
<dbReference type="Proteomes" id="UP000002277">
    <property type="component" value="Chromosome 20"/>
</dbReference>
<dbReference type="Bgee" id="ENSPTRG00000013536">
    <property type="expression patterns" value="Expressed in thymus and 1 other cell type or tissue"/>
</dbReference>
<dbReference type="GO" id="GO:0005615">
    <property type="term" value="C:extracellular space"/>
    <property type="evidence" value="ECO:0000318"/>
    <property type="project" value="GO_Central"/>
</dbReference>
<dbReference type="GO" id="GO:0004867">
    <property type="term" value="F:serine-type endopeptidase inhibitor activity"/>
    <property type="evidence" value="ECO:0000318"/>
    <property type="project" value="GO_Central"/>
</dbReference>
<dbReference type="GO" id="GO:0019731">
    <property type="term" value="P:antibacterial humoral response"/>
    <property type="evidence" value="ECO:0000318"/>
    <property type="project" value="GO_Central"/>
</dbReference>
<dbReference type="GO" id="GO:0045087">
    <property type="term" value="P:innate immune response"/>
    <property type="evidence" value="ECO:0000318"/>
    <property type="project" value="GO_Central"/>
</dbReference>
<dbReference type="FunFam" id="4.10.75.10:FF:000005">
    <property type="entry name" value="WAP four-disulfide core domain protein 12"/>
    <property type="match status" value="1"/>
</dbReference>
<dbReference type="Gene3D" id="4.10.75.10">
    <property type="entry name" value="Elafin-like"/>
    <property type="match status" value="1"/>
</dbReference>
<dbReference type="InterPro" id="IPR036645">
    <property type="entry name" value="Elafin-like_sf"/>
</dbReference>
<dbReference type="InterPro" id="IPR008197">
    <property type="entry name" value="WAP_dom"/>
</dbReference>
<dbReference type="PANTHER" id="PTHR47769">
    <property type="entry name" value="WAP FOUR-DISULFIDE CORE DOMAIN PROTEIN 8"/>
    <property type="match status" value="1"/>
</dbReference>
<dbReference type="PANTHER" id="PTHR47769:SF1">
    <property type="entry name" value="WAP FOUR-DISULFIDE CORE DOMAIN PROTEIN 8"/>
    <property type="match status" value="1"/>
</dbReference>
<dbReference type="Pfam" id="PF00095">
    <property type="entry name" value="WAP"/>
    <property type="match status" value="1"/>
</dbReference>
<dbReference type="PRINTS" id="PR00003">
    <property type="entry name" value="4DISULPHCORE"/>
</dbReference>
<dbReference type="SMART" id="SM00217">
    <property type="entry name" value="WAP"/>
    <property type="match status" value="1"/>
</dbReference>
<dbReference type="SUPFAM" id="SSF57256">
    <property type="entry name" value="Elafin-like"/>
    <property type="match status" value="1"/>
</dbReference>
<dbReference type="PROSITE" id="PS51390">
    <property type="entry name" value="WAP"/>
    <property type="match status" value="1"/>
</dbReference>